<gene>
    <name evidence="1" type="primary">rplA</name>
    <name evidence="1" type="synonym">rpl1</name>
    <name type="ordered locus">P9211_02211</name>
</gene>
<proteinExistence type="inferred from homology"/>
<reference key="1">
    <citation type="journal article" date="2007" name="PLoS Genet.">
        <title>Patterns and implications of gene gain and loss in the evolution of Prochlorococcus.</title>
        <authorList>
            <person name="Kettler G.C."/>
            <person name="Martiny A.C."/>
            <person name="Huang K."/>
            <person name="Zucker J."/>
            <person name="Coleman M.L."/>
            <person name="Rodrigue S."/>
            <person name="Chen F."/>
            <person name="Lapidus A."/>
            <person name="Ferriera S."/>
            <person name="Johnson J."/>
            <person name="Steglich C."/>
            <person name="Church G.M."/>
            <person name="Richardson P."/>
            <person name="Chisholm S.W."/>
        </authorList>
    </citation>
    <scope>NUCLEOTIDE SEQUENCE [LARGE SCALE GENOMIC DNA]</scope>
    <source>
        <strain>MIT 9211</strain>
    </source>
</reference>
<protein>
    <recommendedName>
        <fullName evidence="1">Large ribosomal subunit protein uL1</fullName>
    </recommendedName>
    <alternativeName>
        <fullName evidence="2">50S ribosomal protein L1</fullName>
    </alternativeName>
</protein>
<name>RL1_PROM4</name>
<comment type="function">
    <text evidence="1">Binds directly to 23S rRNA. The L1 stalk is quite mobile in the ribosome, and is involved in E site tRNA release.</text>
</comment>
<comment type="function">
    <text evidence="1">Protein L1 is also a translational repressor protein, it controls the translation of the L11 operon by binding to its mRNA.</text>
</comment>
<comment type="subunit">
    <text evidence="1">Part of the 50S ribosomal subunit.</text>
</comment>
<comment type="similarity">
    <text evidence="1">Belongs to the universal ribosomal protein uL1 family.</text>
</comment>
<evidence type="ECO:0000255" key="1">
    <source>
        <dbReference type="HAMAP-Rule" id="MF_01318"/>
    </source>
</evidence>
<evidence type="ECO:0000305" key="2"/>
<sequence length="234" mass="25313">MTKISKRMASLSSKIEDRAYPPLEAINLVKESSTAKFDETIEAHVRLGIDPKYTDQQIRTTVTLPNGTGQTIRIAVIARGEKVAEAKSAGADLAGEEELVDSISKGEMGFDLLIATPDMMPKVAKLGRVLGPRGLMPNPKTGTVTADLVGAIKEFKAGKLEFRADKAGIIHVRFGKASFNADALLENLKTLQETIDRNKPSGAKGRFWKTLYITSTMGPSIEVDIAALQDISQE</sequence>
<feature type="chain" id="PRO_1000141443" description="Large ribosomal subunit protein uL1">
    <location>
        <begin position="1"/>
        <end position="234"/>
    </location>
</feature>
<accession>A9BDG6</accession>
<keyword id="KW-1185">Reference proteome</keyword>
<keyword id="KW-0678">Repressor</keyword>
<keyword id="KW-0687">Ribonucleoprotein</keyword>
<keyword id="KW-0689">Ribosomal protein</keyword>
<keyword id="KW-0694">RNA-binding</keyword>
<keyword id="KW-0699">rRNA-binding</keyword>
<keyword id="KW-0810">Translation regulation</keyword>
<keyword id="KW-0820">tRNA-binding</keyword>
<dbReference type="EMBL" id="CP000878">
    <property type="protein sequence ID" value="ABX08152.1"/>
    <property type="molecule type" value="Genomic_DNA"/>
</dbReference>
<dbReference type="RefSeq" id="WP_012194777.1">
    <property type="nucleotide sequence ID" value="NC_009976.1"/>
</dbReference>
<dbReference type="SMR" id="A9BDG6"/>
<dbReference type="STRING" id="93059.P9211_02211"/>
<dbReference type="KEGG" id="pmj:P9211_02211"/>
<dbReference type="eggNOG" id="COG0081">
    <property type="taxonomic scope" value="Bacteria"/>
</dbReference>
<dbReference type="HOGENOM" id="CLU_062853_0_0_3"/>
<dbReference type="OrthoDB" id="9803740at2"/>
<dbReference type="Proteomes" id="UP000000788">
    <property type="component" value="Chromosome"/>
</dbReference>
<dbReference type="GO" id="GO:0015934">
    <property type="term" value="C:large ribosomal subunit"/>
    <property type="evidence" value="ECO:0007669"/>
    <property type="project" value="InterPro"/>
</dbReference>
<dbReference type="GO" id="GO:0019843">
    <property type="term" value="F:rRNA binding"/>
    <property type="evidence" value="ECO:0007669"/>
    <property type="project" value="UniProtKB-UniRule"/>
</dbReference>
<dbReference type="GO" id="GO:0003735">
    <property type="term" value="F:structural constituent of ribosome"/>
    <property type="evidence" value="ECO:0007669"/>
    <property type="project" value="InterPro"/>
</dbReference>
<dbReference type="GO" id="GO:0000049">
    <property type="term" value="F:tRNA binding"/>
    <property type="evidence" value="ECO:0007669"/>
    <property type="project" value="UniProtKB-KW"/>
</dbReference>
<dbReference type="GO" id="GO:0006417">
    <property type="term" value="P:regulation of translation"/>
    <property type="evidence" value="ECO:0007669"/>
    <property type="project" value="UniProtKB-KW"/>
</dbReference>
<dbReference type="GO" id="GO:0006412">
    <property type="term" value="P:translation"/>
    <property type="evidence" value="ECO:0007669"/>
    <property type="project" value="UniProtKB-UniRule"/>
</dbReference>
<dbReference type="CDD" id="cd00403">
    <property type="entry name" value="Ribosomal_L1"/>
    <property type="match status" value="1"/>
</dbReference>
<dbReference type="FunFam" id="3.40.50.790:FF:000001">
    <property type="entry name" value="50S ribosomal protein L1"/>
    <property type="match status" value="1"/>
</dbReference>
<dbReference type="Gene3D" id="3.30.190.20">
    <property type="match status" value="1"/>
</dbReference>
<dbReference type="Gene3D" id="3.40.50.790">
    <property type="match status" value="1"/>
</dbReference>
<dbReference type="HAMAP" id="MF_01318_B">
    <property type="entry name" value="Ribosomal_uL1_B"/>
    <property type="match status" value="1"/>
</dbReference>
<dbReference type="InterPro" id="IPR005878">
    <property type="entry name" value="Ribosom_uL1_bac-type"/>
</dbReference>
<dbReference type="InterPro" id="IPR002143">
    <property type="entry name" value="Ribosomal_uL1"/>
</dbReference>
<dbReference type="InterPro" id="IPR023674">
    <property type="entry name" value="Ribosomal_uL1-like"/>
</dbReference>
<dbReference type="InterPro" id="IPR028364">
    <property type="entry name" value="Ribosomal_uL1/biogenesis"/>
</dbReference>
<dbReference type="InterPro" id="IPR016095">
    <property type="entry name" value="Ribosomal_uL1_3-a/b-sand"/>
</dbReference>
<dbReference type="InterPro" id="IPR023673">
    <property type="entry name" value="Ribosomal_uL1_CS"/>
</dbReference>
<dbReference type="NCBIfam" id="TIGR01169">
    <property type="entry name" value="rplA_bact"/>
    <property type="match status" value="1"/>
</dbReference>
<dbReference type="PANTHER" id="PTHR36427">
    <property type="entry name" value="54S RIBOSOMAL PROTEIN L1, MITOCHONDRIAL"/>
    <property type="match status" value="1"/>
</dbReference>
<dbReference type="PANTHER" id="PTHR36427:SF3">
    <property type="entry name" value="LARGE RIBOSOMAL SUBUNIT PROTEIN UL1M"/>
    <property type="match status" value="1"/>
</dbReference>
<dbReference type="Pfam" id="PF00687">
    <property type="entry name" value="Ribosomal_L1"/>
    <property type="match status" value="1"/>
</dbReference>
<dbReference type="PIRSF" id="PIRSF002155">
    <property type="entry name" value="Ribosomal_L1"/>
    <property type="match status" value="1"/>
</dbReference>
<dbReference type="SUPFAM" id="SSF56808">
    <property type="entry name" value="Ribosomal protein L1"/>
    <property type="match status" value="1"/>
</dbReference>
<dbReference type="PROSITE" id="PS01199">
    <property type="entry name" value="RIBOSOMAL_L1"/>
    <property type="match status" value="1"/>
</dbReference>
<organism>
    <name type="scientific">Prochlorococcus marinus (strain MIT 9211)</name>
    <dbReference type="NCBI Taxonomy" id="93059"/>
    <lineage>
        <taxon>Bacteria</taxon>
        <taxon>Bacillati</taxon>
        <taxon>Cyanobacteriota</taxon>
        <taxon>Cyanophyceae</taxon>
        <taxon>Synechococcales</taxon>
        <taxon>Prochlorococcaceae</taxon>
        <taxon>Prochlorococcus</taxon>
    </lineage>
</organism>